<sequence>MFFKPDFRPRCAKWLIATGLFLMLGACVEKPTTLERVKEDGVLRVITRNSPATYFQDRNGETGFEYELVKRFADDLGVELKIETADNLDDLFDQMNKPGGPVLGAAGLIETPLRKQQARFSHSYLEVTPQVVYRNGQSRPTDPGDLVGKRIVVLKGSAHAEQLAALKAQNPGIQYEESDAVEVVDLLRMVDEGQIDLTLVDSNELAMNQVYFPNVRVAFDLGEARAQRWAVAPGEDNSLLNEINAYLDKVEKNGTLQRLKDRYYGHVDVLGYVGAYTFAQHLQERLPKYEKHFQTSAKKEQVDWRLLAAIGYQESMWQPTVTSKTGVRGLMMLTQNTAQAMGVSNRLDARQSIQGGAKYFAYIKDQLDDSIKEPDRTWLALASYNIGSGHLEDARKLAQNEGLNPDKWLDVKKMLPRLAQKKWYSKTRYGYARGGEPVHFVANIRRYYDILTWVTQPQLEGSQVADGNLHVPGVDKTQPPVPPASPVPSSSSTDESPL</sequence>
<organism>
    <name type="scientific">Pseudomonas syringae pv. syringae (strain B728a)</name>
    <dbReference type="NCBI Taxonomy" id="205918"/>
    <lineage>
        <taxon>Bacteria</taxon>
        <taxon>Pseudomonadati</taxon>
        <taxon>Pseudomonadota</taxon>
        <taxon>Gammaproteobacteria</taxon>
        <taxon>Pseudomonadales</taxon>
        <taxon>Pseudomonadaceae</taxon>
        <taxon>Pseudomonas</taxon>
        <taxon>Pseudomonas syringae</taxon>
    </lineage>
</organism>
<evidence type="ECO:0000255" key="1">
    <source>
        <dbReference type="HAMAP-Rule" id="MF_02016"/>
    </source>
</evidence>
<evidence type="ECO:0000256" key="2">
    <source>
        <dbReference type="SAM" id="MobiDB-lite"/>
    </source>
</evidence>
<comment type="function">
    <text evidence="1">Murein-degrading enzyme that degrades murein glycan strands and insoluble, high-molecular weight murein sacculi, with the concomitant formation of a 1,6-anhydromuramoyl product. Lytic transglycosylases (LTs) play an integral role in the metabolism of the peptidoglycan (PG) sacculus. Their lytic action creates space within the PG sacculus to allow for its expansion as well as for the insertion of various structures such as secretion systems and flagella.</text>
</comment>
<comment type="catalytic activity">
    <reaction evidence="1">
        <text>Exolytic cleavage of the (1-&gt;4)-beta-glycosidic linkage between N-acetylmuramic acid (MurNAc) and N-acetylglucosamine (GlcNAc) residues in peptidoglycan, from either the reducing or the non-reducing ends of the peptidoglycan chains, with concomitant formation of a 1,6-anhydrobond in the MurNAc residue.</text>
        <dbReference type="EC" id="4.2.2.n1"/>
    </reaction>
</comment>
<comment type="subcellular location">
    <subcellularLocation>
        <location>Cell outer membrane</location>
        <topology>Peripheral membrane protein</topology>
    </subcellularLocation>
    <text evidence="1">Attached to the inner leaflet of the outer membrane.</text>
</comment>
<comment type="domain">
    <text evidence="1">The N-terminal domain does not have lytic activity and probably modulates enzymatic activity. The C-terminal domain is the catalytic active domain.</text>
</comment>
<comment type="similarity">
    <text evidence="1">In the N-terminal section; belongs to the bacterial solute-binding protein 3 family.</text>
</comment>
<comment type="similarity">
    <text evidence="1">In the C-terminal section; belongs to the transglycosylase Slt family.</text>
</comment>
<keyword id="KW-0998">Cell outer membrane</keyword>
<keyword id="KW-0961">Cell wall biogenesis/degradation</keyword>
<keyword id="KW-0456">Lyase</keyword>
<keyword id="KW-0472">Membrane</keyword>
<keyword id="KW-0732">Signal</keyword>
<dbReference type="EC" id="4.2.2.n1" evidence="1"/>
<dbReference type="EMBL" id="CP000075">
    <property type="protein sequence ID" value="AAY36319.1"/>
    <property type="molecule type" value="Genomic_DNA"/>
</dbReference>
<dbReference type="RefSeq" id="WP_011266923.1">
    <property type="nucleotide sequence ID" value="NC_007005.1"/>
</dbReference>
<dbReference type="RefSeq" id="YP_234357.1">
    <property type="nucleotide sequence ID" value="NC_007005.1"/>
</dbReference>
<dbReference type="SMR" id="Q4ZX03"/>
<dbReference type="STRING" id="205918.Psyr_1268"/>
<dbReference type="CAZy" id="GH23">
    <property type="family name" value="Glycoside Hydrolase Family 23"/>
</dbReference>
<dbReference type="KEGG" id="psb:Psyr_1268"/>
<dbReference type="PATRIC" id="fig|205918.7.peg.1300"/>
<dbReference type="eggNOG" id="COG4623">
    <property type="taxonomic scope" value="Bacteria"/>
</dbReference>
<dbReference type="HOGENOM" id="CLU_027494_0_1_6"/>
<dbReference type="OrthoDB" id="9815002at2"/>
<dbReference type="Proteomes" id="UP000000426">
    <property type="component" value="Chromosome"/>
</dbReference>
<dbReference type="GO" id="GO:0009279">
    <property type="term" value="C:cell outer membrane"/>
    <property type="evidence" value="ECO:0007669"/>
    <property type="project" value="UniProtKB-SubCell"/>
</dbReference>
<dbReference type="GO" id="GO:0008933">
    <property type="term" value="F:peptidoglycan lytic transglycosylase activity"/>
    <property type="evidence" value="ECO:0007669"/>
    <property type="project" value="UniProtKB-UniRule"/>
</dbReference>
<dbReference type="GO" id="GO:0016998">
    <property type="term" value="P:cell wall macromolecule catabolic process"/>
    <property type="evidence" value="ECO:0007669"/>
    <property type="project" value="UniProtKB-UniRule"/>
</dbReference>
<dbReference type="GO" id="GO:0071555">
    <property type="term" value="P:cell wall organization"/>
    <property type="evidence" value="ECO:0007669"/>
    <property type="project" value="UniProtKB-KW"/>
</dbReference>
<dbReference type="GO" id="GO:0009253">
    <property type="term" value="P:peptidoglycan catabolic process"/>
    <property type="evidence" value="ECO:0007669"/>
    <property type="project" value="TreeGrafter"/>
</dbReference>
<dbReference type="CDD" id="cd13403">
    <property type="entry name" value="MLTF-like"/>
    <property type="match status" value="1"/>
</dbReference>
<dbReference type="CDD" id="cd01009">
    <property type="entry name" value="PBP2_YfhD_N"/>
    <property type="match status" value="1"/>
</dbReference>
<dbReference type="Gene3D" id="1.10.530.10">
    <property type="match status" value="1"/>
</dbReference>
<dbReference type="Gene3D" id="3.40.190.10">
    <property type="entry name" value="Periplasmic binding protein-like II"/>
    <property type="match status" value="2"/>
</dbReference>
<dbReference type="HAMAP" id="MF_02016">
    <property type="entry name" value="MltF"/>
    <property type="match status" value="1"/>
</dbReference>
<dbReference type="InterPro" id="IPR023346">
    <property type="entry name" value="Lysozyme-like_dom_sf"/>
</dbReference>
<dbReference type="InterPro" id="IPR023703">
    <property type="entry name" value="MltF"/>
</dbReference>
<dbReference type="InterPro" id="IPR001638">
    <property type="entry name" value="Solute-binding_3/MltF_N"/>
</dbReference>
<dbReference type="InterPro" id="IPR000189">
    <property type="entry name" value="Transglyc_AS"/>
</dbReference>
<dbReference type="InterPro" id="IPR008258">
    <property type="entry name" value="Transglycosylase_SLT_dom_1"/>
</dbReference>
<dbReference type="NCBIfam" id="NF008112">
    <property type="entry name" value="PRK10859.1"/>
    <property type="match status" value="1"/>
</dbReference>
<dbReference type="PANTHER" id="PTHR35936">
    <property type="entry name" value="MEMBRANE-BOUND LYTIC MUREIN TRANSGLYCOSYLASE F"/>
    <property type="match status" value="1"/>
</dbReference>
<dbReference type="PANTHER" id="PTHR35936:SF32">
    <property type="entry name" value="MEMBRANE-BOUND LYTIC MUREIN TRANSGLYCOSYLASE F"/>
    <property type="match status" value="1"/>
</dbReference>
<dbReference type="Pfam" id="PF00497">
    <property type="entry name" value="SBP_bac_3"/>
    <property type="match status" value="1"/>
</dbReference>
<dbReference type="Pfam" id="PF01464">
    <property type="entry name" value="SLT"/>
    <property type="match status" value="1"/>
</dbReference>
<dbReference type="SMART" id="SM00062">
    <property type="entry name" value="PBPb"/>
    <property type="match status" value="1"/>
</dbReference>
<dbReference type="SUPFAM" id="SSF53955">
    <property type="entry name" value="Lysozyme-like"/>
    <property type="match status" value="1"/>
</dbReference>
<dbReference type="SUPFAM" id="SSF53850">
    <property type="entry name" value="Periplasmic binding protein-like II"/>
    <property type="match status" value="1"/>
</dbReference>
<dbReference type="PROSITE" id="PS51257">
    <property type="entry name" value="PROKAR_LIPOPROTEIN"/>
    <property type="match status" value="1"/>
</dbReference>
<dbReference type="PROSITE" id="PS00922">
    <property type="entry name" value="TRANSGLYCOSYLASE"/>
    <property type="match status" value="1"/>
</dbReference>
<name>MLTF_PSEU2</name>
<feature type="signal peptide" evidence="1">
    <location>
        <begin position="1"/>
        <end position="29"/>
    </location>
</feature>
<feature type="chain" id="PRO_0000353967" description="Membrane-bound lytic murein transglycosylase F">
    <location>
        <begin position="30"/>
        <end position="498"/>
    </location>
</feature>
<feature type="region of interest" description="Non-LT domain" evidence="1">
    <location>
        <begin position="30"/>
        <end position="267"/>
    </location>
</feature>
<feature type="region of interest" description="LT domain" evidence="1">
    <location>
        <begin position="268"/>
        <end position="498"/>
    </location>
</feature>
<feature type="region of interest" description="Disordered" evidence="2">
    <location>
        <begin position="464"/>
        <end position="498"/>
    </location>
</feature>
<feature type="active site" evidence="1">
    <location>
        <position position="314"/>
    </location>
</feature>
<proteinExistence type="inferred from homology"/>
<accession>Q4ZX03</accession>
<protein>
    <recommendedName>
        <fullName evidence="1">Membrane-bound lytic murein transglycosylase F</fullName>
        <ecNumber evidence="1">4.2.2.n1</ecNumber>
    </recommendedName>
    <alternativeName>
        <fullName evidence="1">Murein lyase F</fullName>
    </alternativeName>
</protein>
<reference key="1">
    <citation type="journal article" date="2005" name="Proc. Natl. Acad. Sci. U.S.A.">
        <title>Comparison of the complete genome sequences of Pseudomonas syringae pv. syringae B728a and pv. tomato DC3000.</title>
        <authorList>
            <person name="Feil H."/>
            <person name="Feil W.S."/>
            <person name="Chain P."/>
            <person name="Larimer F."/>
            <person name="Dibartolo G."/>
            <person name="Copeland A."/>
            <person name="Lykidis A."/>
            <person name="Trong S."/>
            <person name="Nolan M."/>
            <person name="Goltsman E."/>
            <person name="Thiel J."/>
            <person name="Malfatti S."/>
            <person name="Loper J.E."/>
            <person name="Lapidus A."/>
            <person name="Detter J.C."/>
            <person name="Land M."/>
            <person name="Richardson P.M."/>
            <person name="Kyrpides N.C."/>
            <person name="Ivanova N."/>
            <person name="Lindow S.E."/>
        </authorList>
    </citation>
    <scope>NUCLEOTIDE SEQUENCE [LARGE SCALE GENOMIC DNA]</scope>
    <source>
        <strain>B728a</strain>
    </source>
</reference>
<gene>
    <name evidence="1" type="primary">mltF</name>
    <name type="ordered locus">Psyr_1268</name>
</gene>